<feature type="chain" id="PRO_1000025218" description="Co-chaperonin GroES">
    <location>
        <begin position="1"/>
        <end position="97"/>
    </location>
</feature>
<comment type="function">
    <text evidence="1">Together with the chaperonin GroEL, plays an essential role in assisting protein folding. The GroEL-GroES system forms a nano-cage that allows encapsulation of the non-native substrate proteins and provides a physical environment optimized to promote and accelerate protein folding. GroES binds to the apical surface of the GroEL ring, thereby capping the opening of the GroEL channel.</text>
</comment>
<comment type="subunit">
    <text evidence="1">Heptamer of 7 subunits arranged in a ring. Interacts with the chaperonin GroEL.</text>
</comment>
<comment type="subcellular location">
    <subcellularLocation>
        <location evidence="1">Cytoplasm</location>
    </subcellularLocation>
</comment>
<comment type="similarity">
    <text evidence="1">Belongs to the GroES chaperonin family.</text>
</comment>
<reference key="1">
    <citation type="journal article" date="2005" name="Genome Res.">
        <title>Genome sequence of Blochmannia pennsylvanicus indicates parallel evolutionary trends among bacterial mutualists of insects.</title>
        <authorList>
            <person name="Degnan P.H."/>
            <person name="Lazarus A.B."/>
            <person name="Wernegreen J.J."/>
        </authorList>
    </citation>
    <scope>NUCLEOTIDE SEQUENCE [LARGE SCALE GENOMIC DNA]</scope>
    <source>
        <strain>BPEN</strain>
    </source>
</reference>
<organism>
    <name type="scientific">Blochmanniella pennsylvanica (strain BPEN)</name>
    <dbReference type="NCBI Taxonomy" id="291272"/>
    <lineage>
        <taxon>Bacteria</taxon>
        <taxon>Pseudomonadati</taxon>
        <taxon>Pseudomonadota</taxon>
        <taxon>Gammaproteobacteria</taxon>
        <taxon>Enterobacterales</taxon>
        <taxon>Enterobacteriaceae</taxon>
        <taxon>ant endosymbionts</taxon>
        <taxon>Candidatus Blochmanniella</taxon>
    </lineage>
</organism>
<dbReference type="EMBL" id="CP000016">
    <property type="protein sequence ID" value="AAZ40716.1"/>
    <property type="molecule type" value="Genomic_DNA"/>
</dbReference>
<dbReference type="RefSeq" id="WP_011282622.1">
    <property type="nucleotide sequence ID" value="NC_007292.1"/>
</dbReference>
<dbReference type="SMR" id="Q493W8"/>
<dbReference type="STRING" id="291272.BPEN_072"/>
<dbReference type="KEGG" id="bpn:BPEN_072"/>
<dbReference type="eggNOG" id="COG0234">
    <property type="taxonomic scope" value="Bacteria"/>
</dbReference>
<dbReference type="HOGENOM" id="CLU_132825_1_1_6"/>
<dbReference type="OrthoDB" id="9806791at2"/>
<dbReference type="Proteomes" id="UP000007794">
    <property type="component" value="Chromosome"/>
</dbReference>
<dbReference type="GO" id="GO:0005737">
    <property type="term" value="C:cytoplasm"/>
    <property type="evidence" value="ECO:0007669"/>
    <property type="project" value="UniProtKB-SubCell"/>
</dbReference>
<dbReference type="GO" id="GO:0005524">
    <property type="term" value="F:ATP binding"/>
    <property type="evidence" value="ECO:0007669"/>
    <property type="project" value="InterPro"/>
</dbReference>
<dbReference type="GO" id="GO:0046872">
    <property type="term" value="F:metal ion binding"/>
    <property type="evidence" value="ECO:0007669"/>
    <property type="project" value="TreeGrafter"/>
</dbReference>
<dbReference type="GO" id="GO:0044183">
    <property type="term" value="F:protein folding chaperone"/>
    <property type="evidence" value="ECO:0007669"/>
    <property type="project" value="InterPro"/>
</dbReference>
<dbReference type="GO" id="GO:0051087">
    <property type="term" value="F:protein-folding chaperone binding"/>
    <property type="evidence" value="ECO:0007669"/>
    <property type="project" value="TreeGrafter"/>
</dbReference>
<dbReference type="GO" id="GO:0051082">
    <property type="term" value="F:unfolded protein binding"/>
    <property type="evidence" value="ECO:0007669"/>
    <property type="project" value="TreeGrafter"/>
</dbReference>
<dbReference type="GO" id="GO:0051085">
    <property type="term" value="P:chaperone cofactor-dependent protein refolding"/>
    <property type="evidence" value="ECO:0007669"/>
    <property type="project" value="TreeGrafter"/>
</dbReference>
<dbReference type="CDD" id="cd00320">
    <property type="entry name" value="cpn10"/>
    <property type="match status" value="1"/>
</dbReference>
<dbReference type="FunFam" id="2.30.33.40:FF:000001">
    <property type="entry name" value="10 kDa chaperonin"/>
    <property type="match status" value="1"/>
</dbReference>
<dbReference type="Gene3D" id="2.30.33.40">
    <property type="entry name" value="GroES chaperonin"/>
    <property type="match status" value="1"/>
</dbReference>
<dbReference type="HAMAP" id="MF_00580">
    <property type="entry name" value="CH10"/>
    <property type="match status" value="1"/>
</dbReference>
<dbReference type="InterPro" id="IPR020818">
    <property type="entry name" value="Chaperonin_GroES"/>
</dbReference>
<dbReference type="InterPro" id="IPR037124">
    <property type="entry name" value="Chaperonin_GroES_sf"/>
</dbReference>
<dbReference type="InterPro" id="IPR018369">
    <property type="entry name" value="Chaprnonin_Cpn10_CS"/>
</dbReference>
<dbReference type="InterPro" id="IPR011032">
    <property type="entry name" value="GroES-like_sf"/>
</dbReference>
<dbReference type="NCBIfam" id="NF001526">
    <property type="entry name" value="PRK00364.1-1"/>
    <property type="match status" value="1"/>
</dbReference>
<dbReference type="NCBIfam" id="NF001527">
    <property type="entry name" value="PRK00364.1-2"/>
    <property type="match status" value="1"/>
</dbReference>
<dbReference type="PANTHER" id="PTHR10772">
    <property type="entry name" value="10 KDA HEAT SHOCK PROTEIN"/>
    <property type="match status" value="1"/>
</dbReference>
<dbReference type="PANTHER" id="PTHR10772:SF58">
    <property type="entry name" value="CO-CHAPERONIN GROES"/>
    <property type="match status" value="1"/>
</dbReference>
<dbReference type="Pfam" id="PF00166">
    <property type="entry name" value="Cpn10"/>
    <property type="match status" value="1"/>
</dbReference>
<dbReference type="PRINTS" id="PR00297">
    <property type="entry name" value="CHAPERONIN10"/>
</dbReference>
<dbReference type="SMART" id="SM00883">
    <property type="entry name" value="Cpn10"/>
    <property type="match status" value="1"/>
</dbReference>
<dbReference type="SUPFAM" id="SSF50129">
    <property type="entry name" value="GroES-like"/>
    <property type="match status" value="1"/>
</dbReference>
<dbReference type="PROSITE" id="PS00681">
    <property type="entry name" value="CHAPERONINS_CPN10"/>
    <property type="match status" value="1"/>
</dbReference>
<keyword id="KW-0143">Chaperone</keyword>
<keyword id="KW-0963">Cytoplasm</keyword>
<keyword id="KW-1185">Reference proteome</keyword>
<proteinExistence type="inferred from homology"/>
<sequence>MKIRPLHDRVIVKRKEVESKSAGGIVLTGSAAGKSTRGEVLAVGHGRVLENGGVKALDVRIGDTVIFNDGYGVKVEKIDNEEVLIMSESDILAIVEK</sequence>
<gene>
    <name evidence="1" type="primary">groES</name>
    <name evidence="1" type="synonym">groS</name>
    <name type="ordered locus">BPEN_072</name>
</gene>
<evidence type="ECO:0000255" key="1">
    <source>
        <dbReference type="HAMAP-Rule" id="MF_00580"/>
    </source>
</evidence>
<name>CH10_BLOPB</name>
<accession>Q493W8</accession>
<protein>
    <recommendedName>
        <fullName evidence="1">Co-chaperonin GroES</fullName>
    </recommendedName>
    <alternativeName>
        <fullName evidence="1">10 kDa chaperonin</fullName>
    </alternativeName>
    <alternativeName>
        <fullName evidence="1">Chaperonin-10</fullName>
        <shortName evidence="1">Cpn10</shortName>
    </alternativeName>
</protein>